<name>CRT_PLAFA</name>
<reference key="1">
    <citation type="journal article" date="2000" name="Mol. Cell">
        <title>Mutations in the P. falciparum digestive vacuole transmembrane protein PfCRT and evidence for their role in chloroquine resistance.</title>
        <authorList>
            <person name="Fidock D.A."/>
            <person name="Nomura T."/>
            <person name="Talley A.K."/>
            <person name="Cooper R.A."/>
            <person name="Dzekunov S.M."/>
            <person name="Ferdig M.T."/>
            <person name="Ursos L.M.B."/>
            <person name="bir Singh Sidhu A."/>
            <person name="Naude B."/>
            <person name="Deitsch K.W."/>
            <person name="Su X.-Z."/>
            <person name="Wootton J.C."/>
            <person name="Roepe P.D."/>
            <person name="Wellems T.E."/>
        </authorList>
    </citation>
    <scope>NUCLEOTIDE SEQUENCE [GENOMIC DNA / MRNA]</scope>
    <scope>SUBCELLULAR LOCATION</scope>
    <scope>VARIANTS CHLOROQUINE RESISTANCE TYPE 1 THR-76 AND SER-220</scope>
    <scope>VARIANTS SER-72; ILE-74; GLU-75; ILE-76; THR-76; SER-220; GLU-271; ASP-326; SER-326; LEU-356; THR-356 AND ILE-371</scope>
    <source>
        <strain evidence="20">Dd2</strain>
    </source>
</reference>
<reference key="2">
    <citation type="journal article" date="2004" name="Mol. Cell">
        <title>Evidence for a central role for PfCRT in conferring Plasmodium falciparum resistance to diverse antimalarial agents.</title>
        <authorList>
            <person name="Johnson D.J."/>
            <person name="Fidock D.A."/>
            <person name="Mungthin M."/>
            <person name="Lakshmanan V."/>
            <person name="bir Singh Sidhu A."/>
            <person name="Bray P.G."/>
            <person name="Ward S.A."/>
        </authorList>
    </citation>
    <scope>NUCLEOTIDE SEQUENCE [GENOMIC DNA]</scope>
    <scope>VARIANTS CHLOROQUINE RESISTANCE TYPE 1 THR-76 AND SER-220</scope>
    <scope>VARIANTS ILE-74; GLU-75; LYS-75; THR-76; ALA-152; ARG-163; SER-220; GLU-271; LEU-275; SER-326; VAL-356 AND ILE-371</scope>
</reference>
<reference key="3">
    <citation type="submission" date="2002-01" db="EMBL/GenBank/DDBJ databases">
        <title>Plasmodium falciparum TM6 putative chloroquine resistance transporter (crt) mRNA.</title>
        <authorList>
            <person name="Li G.-D."/>
            <person name="Ward S.A."/>
        </authorList>
    </citation>
    <scope>NUCLEOTIDE SEQUENCE [MRNA]</scope>
    <scope>VARIANTS ILE-74; GLU-75; THR-76; ARG-123; ALA-205; SER-220; GLU-271; SER-326 AND ILE-371</scope>
    <source>
        <strain>TM6</strain>
    </source>
</reference>
<reference key="4">
    <citation type="journal article" date="2007" name="Am. J. Trop. Med. Hyg.">
        <title>Polymorphisms in the pfcrt and pfmdr1 Genes of Plasmodium falciparum and in Vitro Susceptibility to Amodiaquine and Desethylamodiaquine.</title>
        <authorList>
            <person name="Echeverry D.F."/>
            <person name="Holmgren G."/>
            <person name="Murillo C."/>
            <person name="Higuita J.C."/>
            <person name="Bjoerkman A."/>
            <person name="Gil J.P."/>
            <person name="Osorio L."/>
        </authorList>
    </citation>
    <scope>NUCLEOTIDE SEQUENCE [MRNA] OF 1-416</scope>
    <scope>VARIANTS GLU-75; THR-76; GLN-97; SER-220; ASP-326; SER-333; ASN-334; LEU-356; ILE-371 AND THR-371</scope>
    <source>
        <strain>TA6182</strain>
        <strain>TA7519</strain>
        <strain>TU741</strain>
    </source>
</reference>
<reference key="5">
    <citation type="submission" date="2006-05" db="EMBL/GenBank/DDBJ databases">
        <authorList>
            <person name="Kumar A."/>
            <person name="Zheng H."/>
            <person name="Chizhikov V."/>
        </authorList>
    </citation>
    <scope>NUCLEOTIDE SEQUENCE [MRNA] OF 35-395</scope>
    <scope>VARIANTS ILE-74; GLU-75; THR-76; SER-220; GLU-271; SER-326 AND ILE-371</scope>
    <source>
        <strain>FVO</strain>
    </source>
</reference>
<reference key="6">
    <citation type="journal article" date="2003" name="Antimicrob. Agents Chemother.">
        <title>pfcrt Allelic types with two novel amino acid mutations in chloroquine-resistant Plasmodium falciparum isolates from the Philippines.</title>
        <authorList>
            <person name="Chen N."/>
            <person name="Kyle D.E."/>
            <person name="Pasay C."/>
            <person name="Fowler E.V."/>
            <person name="Baker J."/>
            <person name="Peters J.M."/>
            <person name="Cheng Q."/>
        </authorList>
    </citation>
    <scope>NUCLEOTIDE SEQUENCE [MRNA] OF 44-380</scope>
    <scope>VARIANTS CHLOROQUINE RESISTANCE TYPE 2 THR-76; THR-144; TYR-160 AND ASP-326</scope>
    <scope>VARIANTS THR-76; THR-144; TYR-160 AND ASP-326</scope>
</reference>
<reference key="7">
    <citation type="journal article" date="2004" name="J. Biol. Chem.">
        <title>Evidence for activation of endogenous transporters in Xenopus laevis oocytes expressing the Plasmodium falciparum chloroquine resistance transporter, PfCRT.</title>
        <authorList>
            <person name="Nessler S."/>
            <person name="Friedrich O."/>
            <person name="Bakouh N."/>
            <person name="Fink R.H.A."/>
            <person name="Sanchez C.P."/>
            <person name="Planelles G."/>
            <person name="Lanzer M."/>
        </authorList>
    </citation>
    <scope>FUNCTION</scope>
</reference>
<reference key="8">
    <citation type="journal article" date="2002" name="Mol. Pharmacol.">
        <title>Alternative mutations at position 76 of the vacuolar transmembrane protein PfCRT are associated with chloroquine resistance and unique stereospecific quinine and quinidine responses in Plasmodium falciparum.</title>
        <authorList>
            <person name="Cooper R.A."/>
            <person name="Ferdig M.T."/>
            <person name="Su X.-Z."/>
            <person name="Ursos L.M.B."/>
            <person name="Mu J."/>
            <person name="Nomura T."/>
            <person name="Fujioka H."/>
            <person name="Fidock D.A."/>
            <person name="Roepe P.D."/>
            <person name="Wellems T.E."/>
        </authorList>
    </citation>
    <scope>CHARACTERIZATION OF VARIANTS ASN-76 AND ILE-76</scope>
    <scope>SUBCELLULAR LOCATION</scope>
</reference>
<reference key="9">
    <citation type="journal article" date="2007" name="Mol. Microbiol.">
        <title>Mutations in transmembrane domains 1, 4 and 9 of the Plasmodium falciparum chloroquine resistance transporter alter susceptibility to chloroquine, quinine and quinidine.</title>
        <authorList>
            <person name="Cooper R.A."/>
            <person name="Lane K.D."/>
            <person name="Deng B."/>
            <person name="Mu J."/>
            <person name="Patel J.J."/>
            <person name="Wellems T.E."/>
            <person name="Su X."/>
            <person name="Ferdig M.T."/>
        </authorList>
    </citation>
    <scope>CHARACTERIZATION OF VARIANTS ARG-72; ASN-76; ILE-76; THR-76; LYS-352 AND ARG-352</scope>
</reference>
<reference key="10">
    <citation type="journal article" date="2007" name="Mol. Microbiol.">
        <authorList>
            <person name="Cooper R.A."/>
            <person name="Lane K.D."/>
            <person name="Deng B."/>
            <person name="Mu J."/>
            <person name="Patel J.J."/>
            <person name="Wellems T.E."/>
            <person name="Su X."/>
            <person name="Ferdig M.T."/>
        </authorList>
    </citation>
    <scope>ERRATUM OF PUBMED:17163969</scope>
</reference>
<reference evidence="25" key="11">
    <citation type="journal article" date="2015" name="Proc. Natl. Acad. Sci. U.S.A.">
        <title>Plasmodium falciparum chloroquine resistance transporter is a H+-coupled polyspecific nutrient and drug exporter.</title>
        <authorList>
            <person name="Juge N."/>
            <person name="Moriyama S."/>
            <person name="Miyaji T."/>
            <person name="Kawakami M."/>
            <person name="Iwai H."/>
            <person name="Fukui T."/>
            <person name="Nelson N."/>
            <person name="Omote H."/>
            <person name="Moriyama Y."/>
        </authorList>
    </citation>
    <scope>FUNCTION</scope>
    <scope>TRANSPORTER ACTIVITY</scope>
    <scope>BIOPHYSICOCHEMICAL PROPERTIES</scope>
    <scope>SUBSTRATE SPECIFICITY</scope>
    <scope>POLYMORPHISM</scope>
</reference>
<reference evidence="25" key="12">
    <citation type="journal article" date="2015" name="Proc. Natl. Acad. Sci. U.S.A.">
        <title>Targeting protein translation, RNA splicing, and degradation by morpholino-based conjugates in Plasmodium falciparum.</title>
        <authorList>
            <person name="Garg A."/>
            <person name="Wesolowski D."/>
            <person name="Alonso D."/>
            <person name="Deitsch K.W."/>
            <person name="Ben Mamoun C."/>
            <person name="Altman S."/>
        </authorList>
    </citation>
    <scope>FUNCTION</scope>
</reference>
<reference evidence="25" key="13">
    <citation type="journal article" date="2015" name="Sci. Rep.">
        <title>Mutations in the Plasmodium falciparum chloroquine resistance transporter, PfCRT, enlarge the parasite's food vacuole and alter drug sensitivities.</title>
        <authorList>
            <person name="Pulcini S."/>
            <person name="Staines H.M."/>
            <person name="Lee A.H."/>
            <person name="Shafik S.H."/>
            <person name="Bouyer G."/>
            <person name="Moore C.M."/>
            <person name="Daley D.A."/>
            <person name="Hoke M.J."/>
            <person name="Altenhofen L.M."/>
            <person name="Painter H.J."/>
            <person name="Mu J."/>
            <person name="Ferguson D.J."/>
            <person name="Llinas M."/>
            <person name="Martin R.E."/>
            <person name="Fidock D.A."/>
            <person name="Cooper R.A."/>
            <person name="Krishna S."/>
        </authorList>
    </citation>
    <scope>FUNCTION</scope>
    <scope>VARIANT PHE-272</scope>
</reference>
<reference key="14">
    <citation type="journal article" date="2017" name="J. Biol. Chem.">
        <title>Iron is a substrate of the Plasmodium falciparum chloroquine resistance transporter PfCRT in Xenopus oocytes.</title>
        <authorList>
            <person name="Bakouh N."/>
            <person name="Bellanca S."/>
            <person name="Nyboer B."/>
            <person name="Moliner Cubel S."/>
            <person name="Karim Z."/>
            <person name="Sanchez C.P."/>
            <person name="Stein W.D."/>
            <person name="Planelles G."/>
            <person name="Lanzer M."/>
        </authorList>
    </citation>
    <scope>FUNCTION</scope>
    <scope>TRANSPORTER ACTIVITY</scope>
    <source>
        <strain evidence="21">Dd2</strain>
        <strain evidence="21">HB3</strain>
    </source>
</reference>
<reference evidence="25" key="15">
    <citation type="journal article" date="2020" name="Nat. Commun.">
        <title>The natural function of the malaria parasite's chloroquine resistance transporter.</title>
        <authorList>
            <person name="Shafik S.H."/>
            <person name="Cobbold S.A."/>
            <person name="Barkat K."/>
            <person name="Richards S.N."/>
            <person name="Lancaster N.S."/>
            <person name="Llinas M."/>
            <person name="Hogg S.J."/>
            <person name="Summers R.L."/>
            <person name="McConville M.J."/>
            <person name="Martin R.E."/>
        </authorList>
    </citation>
    <scope>FUNCTION</scope>
    <scope>ACTIVITY REGULATION</scope>
    <scope>POLYMORPHISM</scope>
    <scope>VARIANT PHE-272</scope>
</reference>
<reference evidence="25" key="16">
    <citation type="journal article" date="2022" name="Microbiol. Spectr.">
        <title>The Knock-Down of the Chloroquine Resistance Transporter PfCRT Is Linked to Oligopeptide Handling in Plasmodium falciparum.</title>
        <authorList>
            <person name="Sanchez C.P."/>
            <person name="Manson E.D.T."/>
            <person name="Moliner Cubel S."/>
            <person name="Mandel L."/>
            <person name="Weidt S.K."/>
            <person name="Barrett M.P."/>
            <person name="Lanzer M."/>
        </authorList>
    </citation>
    <scope>FUNCTION</scope>
    <source>
        <strain evidence="23">Dd2</strain>
    </source>
</reference>
<reference key="17">
    <citation type="journal article" date="2022" name="PLoS Biol.">
        <title>Mechanistic basis for multidrug resistance and collateral drug sensitivity conferred to the malaria parasite by polymorphisms in PfMDR1 and PfCRT.</title>
        <authorList>
            <person name="Shafik S.H."/>
            <person name="Richards S.N."/>
            <person name="Corry B."/>
            <person name="Martin R.E."/>
        </authorList>
    </citation>
    <scope>POLYMORPHISM</scope>
    <source>
        <strain evidence="22">Dd2</strain>
    </source>
</reference>
<reference evidence="25" key="18">
    <citation type="journal article" date="2023" name="Nat. Commun.">
        <title>pH-dependence of the Plasmodium falciparum chloroquine resistance transporter is linked to the transport cycle.</title>
        <authorList>
            <person name="Berger F."/>
            <person name="Gomez G.M."/>
            <person name="Sanchez C.P."/>
            <person name="Posch B."/>
            <person name="Planelles G."/>
            <person name="Sohraby F."/>
            <person name="Nunes-Alves A."/>
            <person name="Lanzer M."/>
        </authorList>
    </citation>
    <scope>FUNCTION</scope>
    <scope>ACTIVITY REGULATION</scope>
    <scope>MUTAGENESIS OF LYS-80; ASN-84; HIS-97; ASP-137; GLU-207; GLU-208; HIS-273; ASP-329 AND GLU-372</scope>
    <source>
        <strain evidence="24">Dd2</strain>
    </source>
</reference>
<sequence length="424" mass="48675">MKFASKKNNQKNSSKNDERYRELDNLVQEGNGSRLGGGSCLGKCAHVFKLIFKEIKDNIFIYILSIIYLSVCVMNKIFAKRTLNKIGNYSFVTSETHNFICMIMFFIVYSLFGNKKGNSKERHRSFNLQFFAISMLDACSVILAFIGLTRTTGNIQSFVLQLSIPINMFFCFLILRYRYHLYNYLGAVIIVVTIALVEMKLSFETQEENSIIFNLVLISALIPVCFSNMTREIVFKKYKIDILRLNAMVSFFQLFTSCLILPVYTLPFLKQLHLPYNEIWTNIKNGFACLFLGRNTVVENCGLGMAKLCDDCDGAWKTFALFSFFNICDNLITSYIIDKFSTMTYTIVSCIQGPAIAIAYYFKFLAGDVVREPRLLDFVTLFGYLFGSIIYRVGNIILERKKMRNEENEDSEGELTNVDSIITQ</sequence>
<organism>
    <name type="scientific">Plasmodium falciparum</name>
    <dbReference type="NCBI Taxonomy" id="5833"/>
    <lineage>
        <taxon>Eukaryota</taxon>
        <taxon>Sar</taxon>
        <taxon>Alveolata</taxon>
        <taxon>Apicomplexa</taxon>
        <taxon>Aconoidasida</taxon>
        <taxon>Haemosporida</taxon>
        <taxon>Plasmodiidae</taxon>
        <taxon>Plasmodium</taxon>
        <taxon>Plasmodium (Laverania)</taxon>
    </lineage>
</organism>
<comment type="function">
    <text evidence="6 10 11 12 13 14 16 17">Nutrient transporter (PubMed:25733858, PubMed:32764664, PubMed:35867395). Substrate transport is pH-dependent (PubMed:25733858, PubMed:37454114, PubMed:28768767). Can transport arginine, lysine, histidine, peptides, histamine and spermidine (PubMed:25733858, PubMed:32764664, PubMed:35867395). May modulate activity of endogenous transporters (PubMed:15258157). Involved in maintaining the osmotic homeostasis of the digestive vacuole (PubMed:26351679, PubMed:26420308, PubMed:35867395). Required for the asexual intraerythrocytic proliferation of parasites (PubMed:35867395). Can transport Fe(2+) and Fe(3+) (PubMed:28768767).</text>
</comment>
<comment type="catalytic activity">
    <reaction evidence="10">
        <text>L-arginine(in) = L-arginine(out)</text>
        <dbReference type="Rhea" id="RHEA:32143"/>
        <dbReference type="ChEBI" id="CHEBI:32682"/>
    </reaction>
</comment>
<comment type="catalytic activity">
    <reaction evidence="10">
        <text>L-lysine(in) = L-lysine(out)</text>
        <dbReference type="Rhea" id="RHEA:70935"/>
        <dbReference type="ChEBI" id="CHEBI:32551"/>
    </reaction>
</comment>
<comment type="catalytic activity">
    <reaction evidence="10">
        <text>L-histidine(out) = L-histidine(in)</text>
        <dbReference type="Rhea" id="RHEA:72807"/>
        <dbReference type="ChEBI" id="CHEBI:57595"/>
    </reaction>
</comment>
<comment type="catalytic activity">
    <reaction evidence="10">
        <text>histamine(out) = histamine(in)</text>
        <dbReference type="Rhea" id="RHEA:73879"/>
        <dbReference type="ChEBI" id="CHEBI:58432"/>
    </reaction>
</comment>
<comment type="catalytic activity">
    <reaction evidence="10">
        <text>spermidine(in) = spermidine(out)</text>
        <dbReference type="Rhea" id="RHEA:35039"/>
        <dbReference type="ChEBI" id="CHEBI:57834"/>
    </reaction>
</comment>
<comment type="catalytic activity">
    <reaction evidence="13">
        <text>Fe(3+)(in) = Fe(3+)(out)</text>
        <dbReference type="Rhea" id="RHEA:34971"/>
        <dbReference type="ChEBI" id="CHEBI:29034"/>
    </reaction>
</comment>
<comment type="catalytic activity">
    <reaction evidence="13">
        <text>Fe(2+)(in) = Fe(2+)(out)</text>
        <dbReference type="Rhea" id="RHEA:28486"/>
        <dbReference type="ChEBI" id="CHEBI:29033"/>
    </reaction>
</comment>
<comment type="activity regulation">
    <text evidence="14 17">Transporter activity is trans-stimulated by host-derived peptides containing 4-11 amino acids (PubMed:32764664). Trans-stimulation by hemoglobin-derived peptide VDPVNF is pH-dependent and sodium-independent (PubMed:32764664). Saquinavir trans-stimulates transport of hemoglobin-derived peptide VDPVNF (PubMed:32764664). Protons are non-competitive inhibitors of chloroquine transport (PubMed:37454114).</text>
</comment>
<comment type="biophysicochemical properties">
    <kinetics>
        <KM evidence="10">0.13 uM for chloroquine</KM>
        <KM evidence="10">0.57 mM for arginine</KM>
        <KM evidence="10">0.43 mM for lysine</KM>
        <KM evidence="10">0.085 mM for histidine</KM>
        <KM evidence="13">70 uM for Fe(2+)</KM>
        <KM evidence="13">130 uM for Fe(3+)</KM>
        <KM evidence="13">20 uM for Fe(2+)</KM>
        <KM evidence="13">170 uM for Fe(3+)</KM>
        <Vmax evidence="10">0.52 nmol/min/mg enzyme for chloroquine</Vmax>
        <Vmax evidence="10">44.7 nmol/min/mg enzyme for arginine</Vmax>
        <Vmax evidence="10">105.0 nmol/min/mg enzyme for lysine</Vmax>
        <Vmax evidence="10">26.0 nmol/min/mg enzyme for histidine</Vmax>
    </kinetics>
</comment>
<comment type="subunit">
    <text evidence="1">Monomer.</text>
</comment>
<comment type="subcellular location">
    <subcellularLocation>
        <location evidence="3 4">Vacuole membrane</location>
        <topology evidence="3 4">Multi-pass membrane protein</topology>
    </subcellularLocation>
    <text evidence="3">Localizes to the parasite digestive vacuole, the site of chloroquine action.</text>
</comment>
<comment type="polymorphism">
    <text evidence="10 14 15">The Dd2 strain is chloroquine-resistant in contrast to the 3D7 strain which is chloroquine-sensitive. Compared to the 3D7 strain, the CRT protein from the Dd2 strain shows increased chloroquine transport rates and reduced capacity for the transport of natural substrates, and determines increased sensitivity of the parasites to saquinavir (PubMed:25733858, PubMed:32764664). In contrast to the CRT protein from 3D7 strain that does not transport lumefantrine or mefloquine, the CRT protein from the Dd2 strain exhibits significant transport activity for both drugs (PubMed:35507548).</text>
</comment>
<comment type="miscellaneous">
    <text evidence="10 14 15 17">Can function as a drug transporter (PubMed:25733858, PubMed:32764664, PubMed:37454114). Can transport chloroquine, quinidine and verapamil (PubMed:25733858, PubMed:32764664, PubMed:37454114). Drug-resistance-conferring mutations reduce capacities for the transport of the natural substrates (PubMed:25733858, PubMed:32764664). Active transport requires a directed pH gradient and a membrane potential (PubMed:25733858). The CRT protein from Dd2 strain can transport lumefantrine or mefloquine (PubMed:35507548).</text>
</comment>
<comment type="similarity">
    <text evidence="25">Belongs to the CRT-like transporter family.</text>
</comment>
<gene>
    <name evidence="25" type="primary">CRT</name>
    <name evidence="25" type="synonym">CG10</name>
</gene>
<accession>Q9N623</accession>
<accession>Q19AE2</accession>
<accession>Q3Y5Z4</accession>
<accession>Q3Y5Z5</accession>
<accession>Q3Y5Z6</accession>
<accession>Q68PG1</accession>
<accession>Q6X529</accession>
<accession>Q7KQ06</accession>
<accession>Q86M68</accession>
<accession>Q86M69</accession>
<accession>Q86M70</accession>
<accession>Q8T9R7</accession>
<accession>Q9N653</accession>
<accession>Q9NH61</accession>
<keyword id="KW-0029">Amino-acid transport</keyword>
<keyword id="KW-1015">Disulfide bond</keyword>
<keyword id="KW-0325">Glycoprotein</keyword>
<keyword id="KW-0406">Ion transport</keyword>
<keyword id="KW-0408">Iron</keyword>
<keyword id="KW-0410">Iron transport</keyword>
<keyword id="KW-0472">Membrane</keyword>
<keyword id="KW-0812">Transmembrane</keyword>
<keyword id="KW-1133">Transmembrane helix</keyword>
<keyword id="KW-0813">Transport</keyword>
<keyword id="KW-0926">Vacuole</keyword>
<proteinExistence type="evidence at protein level"/>
<dbReference type="EMBL" id="AF030694">
    <property type="protein sequence ID" value="AAF26926.1"/>
    <property type="molecule type" value="Genomic_DNA"/>
</dbReference>
<dbReference type="EMBL" id="AF233064">
    <property type="protein sequence ID" value="AAF60271.1"/>
    <property type="molecule type" value="mRNA"/>
</dbReference>
<dbReference type="EMBL" id="AF233065">
    <property type="protein sequence ID" value="AAF60272.1"/>
    <property type="molecule type" value="mRNA"/>
</dbReference>
<dbReference type="EMBL" id="AF233066">
    <property type="protein sequence ID" value="AAF60273.1"/>
    <property type="molecule type" value="mRNA"/>
</dbReference>
<dbReference type="EMBL" id="AF233067">
    <property type="protein sequence ID" value="AAF60274.1"/>
    <property type="molecule type" value="mRNA"/>
</dbReference>
<dbReference type="EMBL" id="AF233068">
    <property type="protein sequence ID" value="AAF60275.1"/>
    <property type="molecule type" value="mRNA"/>
</dbReference>
<dbReference type="EMBL" id="AF495376">
    <property type="protein sequence ID" value="AAO85506.1"/>
    <property type="molecule type" value="Genomic_DNA"/>
</dbReference>
<dbReference type="EMBL" id="AF495377">
    <property type="protein sequence ID" value="AAO85507.1"/>
    <property type="molecule type" value="Genomic_DNA"/>
</dbReference>
<dbReference type="EMBL" id="AF495378">
    <property type="protein sequence ID" value="AAO85508.1"/>
    <property type="molecule type" value="Genomic_DNA"/>
</dbReference>
<dbReference type="EMBL" id="AY651315">
    <property type="protein sequence ID" value="AAU00067.1"/>
    <property type="molecule type" value="mRNA"/>
</dbReference>
<dbReference type="EMBL" id="AF468006">
    <property type="protein sequence ID" value="AAL75580.1"/>
    <property type="molecule type" value="mRNA"/>
</dbReference>
<dbReference type="EMBL" id="DQ156107">
    <property type="protein sequence ID" value="AAZ81606.1"/>
    <property type="molecule type" value="mRNA"/>
</dbReference>
<dbReference type="EMBL" id="DQ156108">
    <property type="protein sequence ID" value="AAZ81607.1"/>
    <property type="molecule type" value="mRNA"/>
</dbReference>
<dbReference type="EMBL" id="DQ156109">
    <property type="protein sequence ID" value="AAZ81608.1"/>
    <property type="molecule type" value="mRNA"/>
</dbReference>
<dbReference type="EMBL" id="DQ533840">
    <property type="protein sequence ID" value="ABF82363.1"/>
    <property type="molecule type" value="mRNA"/>
</dbReference>
<dbReference type="EMBL" id="AY254700">
    <property type="protein sequence ID" value="AAP79044.1"/>
    <property type="molecule type" value="mRNA"/>
</dbReference>
<dbReference type="SMR" id="Q9N623"/>
<dbReference type="BindingDB" id="Q9N623"/>
<dbReference type="ChEMBL" id="CHEMBL1795182"/>
<dbReference type="DrugBank" id="DB11638">
    <property type="generic name" value="Artenimol"/>
</dbReference>
<dbReference type="DrugCentral" id="Q9N623"/>
<dbReference type="TCDB" id="2.A.7.20.1">
    <property type="family name" value="the drug/metabolite transporter (dmt) superfamily"/>
</dbReference>
<dbReference type="GlyCosmos" id="Q9N623">
    <property type="glycosylation" value="1 site, No reported glycans"/>
</dbReference>
<dbReference type="EnsemblProtists" id="CAD50842">
    <property type="protein sequence ID" value="CAD50842"/>
    <property type="gene ID" value="PF3D7_0709000"/>
</dbReference>
<dbReference type="VEuPathDB" id="PlasmoDB:PF3D7_0709000"/>
<dbReference type="VEuPathDB" id="PlasmoDB:Pf7G8-2_000193300"/>
<dbReference type="VEuPathDB" id="PlasmoDB:Pf7G8_070014400"/>
<dbReference type="VEuPathDB" id="PlasmoDB:PfCD01_070012900"/>
<dbReference type="VEuPathDB" id="PlasmoDB:PfDd2_070013200"/>
<dbReference type="VEuPathDB" id="PlasmoDB:PfGA01_070012400"/>
<dbReference type="VEuPathDB" id="PlasmoDB:PfGB4_070014200"/>
<dbReference type="VEuPathDB" id="PlasmoDB:PfGN01_070014100"/>
<dbReference type="VEuPathDB" id="PlasmoDB:PfHB3_070013000"/>
<dbReference type="VEuPathDB" id="PlasmoDB:PfIT_070013900"/>
<dbReference type="VEuPathDB" id="PlasmoDB:PfKE01_070012600"/>
<dbReference type="VEuPathDB" id="PlasmoDB:PfKH01_070013000"/>
<dbReference type="VEuPathDB" id="PlasmoDB:PfKH02_070012300"/>
<dbReference type="VEuPathDB" id="PlasmoDB:PfML01_070013400"/>
<dbReference type="VEuPathDB" id="PlasmoDB:PfNF166_070013500"/>
<dbReference type="VEuPathDB" id="PlasmoDB:PfNF54_070013900"/>
<dbReference type="VEuPathDB" id="PlasmoDB:PfSD01_070012900"/>
<dbReference type="VEuPathDB" id="PlasmoDB:PfSN01_070013800"/>
<dbReference type="VEuPathDB" id="PlasmoDB:PfTG01_070014000"/>
<dbReference type="GO" id="GO:0005774">
    <property type="term" value="C:vacuolar membrane"/>
    <property type="evidence" value="ECO:0007669"/>
    <property type="project" value="UniProtKB-SubCell"/>
</dbReference>
<dbReference type="GO" id="GO:0042910">
    <property type="term" value="F:xenobiotic transmembrane transporter activity"/>
    <property type="evidence" value="ECO:0007669"/>
    <property type="project" value="InterPro"/>
</dbReference>
<dbReference type="GO" id="GO:0006865">
    <property type="term" value="P:amino acid transport"/>
    <property type="evidence" value="ECO:0007669"/>
    <property type="project" value="UniProtKB-KW"/>
</dbReference>
<dbReference type="InterPro" id="IPR013936">
    <property type="entry name" value="CRT-like"/>
</dbReference>
<dbReference type="InterPro" id="IPR017258">
    <property type="entry name" value="Transprt_Chloroquine"/>
</dbReference>
<dbReference type="PANTHER" id="PTHR31326">
    <property type="entry name" value="PROTEIN CLT2, CHLOROPLASTIC"/>
    <property type="match status" value="1"/>
</dbReference>
<dbReference type="PANTHER" id="PTHR31326:SF1">
    <property type="entry name" value="PROTEIN CLT2, CHLOROPLASTIC"/>
    <property type="match status" value="1"/>
</dbReference>
<dbReference type="Pfam" id="PF08627">
    <property type="entry name" value="CRT-like"/>
    <property type="match status" value="1"/>
</dbReference>
<dbReference type="PIRSF" id="PIRSF037671">
    <property type="entry name" value="Transprt_Chloroquine_res"/>
    <property type="match status" value="1"/>
</dbReference>
<protein>
    <recommendedName>
        <fullName evidence="21">Chloroquine resistance transporter</fullName>
        <shortName evidence="21 22">PfCRT</shortName>
    </recommendedName>
</protein>
<feature type="chain" id="PRO_0000385355" description="Chloroquine resistance transporter">
    <location>
        <begin position="1"/>
        <end position="424"/>
    </location>
</feature>
<feature type="topological domain" description="Cytoplasmic" evidence="25">
    <location>
        <begin position="1"/>
        <end position="58"/>
    </location>
</feature>
<feature type="transmembrane region" description="Helical" evidence="2">
    <location>
        <begin position="59"/>
        <end position="79"/>
    </location>
</feature>
<feature type="topological domain" description="Vacuolar" evidence="25">
    <location>
        <begin position="80"/>
        <end position="90"/>
    </location>
</feature>
<feature type="transmembrane region" description="Helical" evidence="2">
    <location>
        <begin position="91"/>
        <end position="111"/>
    </location>
</feature>
<feature type="topological domain" description="Cytoplasmic" evidence="25">
    <location>
        <begin position="112"/>
        <end position="127"/>
    </location>
</feature>
<feature type="transmembrane region" description="Helical" evidence="2">
    <location>
        <begin position="128"/>
        <end position="148"/>
    </location>
</feature>
<feature type="topological domain" description="Vacuolar" evidence="25">
    <location>
        <begin position="149"/>
        <end position="154"/>
    </location>
</feature>
<feature type="transmembrane region" description="Helical" evidence="2">
    <location>
        <begin position="155"/>
        <end position="175"/>
    </location>
</feature>
<feature type="topological domain" description="Cytoplasmic" evidence="25">
    <location>
        <begin position="176"/>
        <end position="178"/>
    </location>
</feature>
<feature type="transmembrane region" description="Helical" evidence="2">
    <location>
        <begin position="179"/>
        <end position="199"/>
    </location>
</feature>
<feature type="topological domain" description="Vacuolar" evidence="25">
    <location>
        <begin position="200"/>
        <end position="209"/>
    </location>
</feature>
<feature type="transmembrane region" description="Helical" evidence="2">
    <location>
        <begin position="210"/>
        <end position="230"/>
    </location>
</feature>
<feature type="topological domain" description="Cytoplasmic" evidence="25">
    <location>
        <begin position="231"/>
        <end position="248"/>
    </location>
</feature>
<feature type="transmembrane region" description="Helical" evidence="2">
    <location>
        <begin position="249"/>
        <end position="269"/>
    </location>
</feature>
<feature type="topological domain" description="Vacuolar" evidence="25">
    <location>
        <begin position="270"/>
        <end position="317"/>
    </location>
</feature>
<feature type="transmembrane region" description="Helical" evidence="2">
    <location>
        <begin position="318"/>
        <end position="338"/>
    </location>
</feature>
<feature type="topological domain" description="Cytoplasmic" evidence="25">
    <location>
        <begin position="339"/>
        <end position="346"/>
    </location>
</feature>
<feature type="transmembrane region" description="Helical" evidence="2">
    <location>
        <begin position="347"/>
        <end position="367"/>
    </location>
</feature>
<feature type="topological domain" description="Vacuolar" evidence="25">
    <location>
        <begin position="368"/>
        <end position="377"/>
    </location>
</feature>
<feature type="transmembrane region" description="Helical" evidence="2">
    <location>
        <begin position="378"/>
        <end position="398"/>
    </location>
</feature>
<feature type="topological domain" description="Cytoplasmic" evidence="25">
    <location>
        <begin position="399"/>
        <end position="424"/>
    </location>
</feature>
<feature type="site" description="pH sensor, predicted to act as a hydrogen acceptor for interactions that may accelerate progression through the transport cycle. Not involved in the proton transfer pathway" evidence="17">
    <location>
        <position position="207"/>
    </location>
</feature>
<feature type="glycosylation site" description="N-linked (GlcNAc...) asparagine" evidence="2">
    <location>
        <position position="88"/>
    </location>
</feature>
<feature type="disulfide bond" evidence="1">
    <location>
        <begin position="289"/>
        <end position="312"/>
    </location>
</feature>
<feature type="disulfide bond" evidence="1">
    <location>
        <begin position="301"/>
        <end position="309"/>
    </location>
</feature>
<feature type="sequence variant" description="Reduced sensitivity to quinine." evidence="8">
    <original>C</original>
    <variation>R</variation>
    <location>
        <position position="72"/>
    </location>
</feature>
<feature type="sequence variant" evidence="3">
    <original>C</original>
    <variation>S</variation>
    <location>
        <position position="72"/>
    </location>
</feature>
<feature type="sequence variant" evidence="3 7 18 19">
    <original>M</original>
    <variation>I</variation>
    <location>
        <position position="74"/>
    </location>
</feature>
<feature type="sequence variant" evidence="3 7 9 18 19">
    <original>N</original>
    <variation>E</variation>
    <location>
        <position position="75"/>
    </location>
</feature>
<feature type="sequence variant" evidence="7">
    <original>N</original>
    <variation>K</variation>
    <location>
        <position position="75"/>
    </location>
</feature>
<feature type="sequence variant" description="Reduced sensitivity to quinine." evidence="3 4 8">
    <original>K</original>
    <variation>I</variation>
    <location>
        <position position="76"/>
    </location>
</feature>
<feature type="sequence variant" description="Reduced sensitivity to quinine." evidence="4 8">
    <original>K</original>
    <variation>N</variation>
    <location>
        <position position="76"/>
    </location>
</feature>
<feature type="sequence variant" description="In chloroquine resistance type 1; when associated with S-220 and in chloroquine resistance type 2; when associated with T-144; Y-160 and D-326; reduced sensitivity to drugs." evidence="3 5 7 8 9 18 19">
    <original>K</original>
    <variation>T</variation>
    <location>
        <position position="76"/>
    </location>
</feature>
<feature type="sequence variant" evidence="9">
    <original>H</original>
    <variation>Q</variation>
    <location>
        <position position="97"/>
    </location>
</feature>
<feature type="sequence variant" evidence="18">
    <original>H</original>
    <variation>R</variation>
    <location>
        <position position="123"/>
    </location>
</feature>
<feature type="sequence variant" description="In chloroquine resistance type 2; when associated with T-76; Y-160 and D-326." evidence="5">
    <original>A</original>
    <variation>T</variation>
    <location>
        <position position="144"/>
    </location>
</feature>
<feature type="sequence variant" evidence="7">
    <original>T</original>
    <variation>A</variation>
    <location>
        <position position="152"/>
    </location>
</feature>
<feature type="sequence variant" description="In chloroquine resistance type 2; when associated with T-76; T-144 and D-326." evidence="5">
    <original>L</original>
    <variation>Y</variation>
    <location>
        <position position="160"/>
    </location>
</feature>
<feature type="sequence variant" description="May repel chloroquine from moving through the channel, leading to higher chloroquine accumulation at its site of action." evidence="7">
    <original>S</original>
    <variation>R</variation>
    <location>
        <position position="163"/>
    </location>
</feature>
<feature type="sequence variant" evidence="18">
    <original>T</original>
    <variation>A</variation>
    <location>
        <position position="205"/>
    </location>
</feature>
<feature type="sequence variant" description="In chloroquine resistance type 1; when associated with T-76." evidence="3 7 9 18 19">
    <original>A</original>
    <variation>S</variation>
    <location>
        <position position="220"/>
    </location>
</feature>
<feature type="sequence variant" evidence="3 7 18 19">
    <original>Q</original>
    <variation>E</variation>
    <location>
        <position position="271"/>
    </location>
</feature>
<feature type="sequence variant" description="Causes the development of enlarged digestive vacuole in the asexual blood stages of the parasites, decreases peptide transport, increases sensitivity of parasites to chloroquine and quinine, decreases sensitivity to blasticidin, has no effect on sensitivity to mefloquine, amodiaquine, monodesethyl amodiaquine, piperaquine and artemisinin." evidence="12 14">
    <original>L</original>
    <variation>F</variation>
    <location>
        <position position="272"/>
    </location>
</feature>
<feature type="sequence variant" evidence="7">
    <original>P</original>
    <variation>L</variation>
    <location>
        <position position="275"/>
    </location>
</feature>
<feature type="sequence variant" description="In chloroquine resistance type 2; when associated with T-76; T-144 and Y-160." evidence="3 5 9">
    <original>N</original>
    <variation>D</variation>
    <location>
        <position position="326"/>
    </location>
</feature>
<feature type="sequence variant" evidence="3 7 18 19">
    <original>N</original>
    <variation>S</variation>
    <location>
        <position position="326"/>
    </location>
</feature>
<feature type="sequence variant" evidence="9">
    <original>T</original>
    <variation>S</variation>
    <location>
        <position position="333"/>
    </location>
</feature>
<feature type="sequence variant" evidence="9">
    <original>S</original>
    <variation>N</variation>
    <location>
        <position position="334"/>
    </location>
</feature>
<feature type="sequence variant" description="Reduced sensitivity to quinine." evidence="8">
    <original>Q</original>
    <variation>K</variation>
    <location>
        <position position="352"/>
    </location>
</feature>
<feature type="sequence variant" description="Reduced sensitivity to quinine." evidence="8">
    <original>Q</original>
    <variation>R</variation>
    <location>
        <position position="352"/>
    </location>
</feature>
<feature type="sequence variant" evidence="3 9">
    <original>I</original>
    <variation>L</variation>
    <location>
        <position position="356"/>
    </location>
</feature>
<feature type="sequence variant" evidence="3">
    <original>I</original>
    <variation>T</variation>
    <location>
        <position position="356"/>
    </location>
</feature>
<feature type="sequence variant" evidence="7">
    <original>I</original>
    <variation>V</variation>
    <location>
        <position position="356"/>
    </location>
</feature>
<feature type="sequence variant" evidence="3 7 9 18 19">
    <original>R</original>
    <variation>I</variation>
    <location>
        <position position="371"/>
    </location>
</feature>
<feature type="sequence variant" evidence="9">
    <original>R</original>
    <variation>T</variation>
    <location>
        <position position="371"/>
    </location>
</feature>
<feature type="mutagenesis site" description="Decreases pH sensitivity of chloroquine transport." evidence="17">
    <original>K</original>
    <variation>A</variation>
    <location>
        <position position="80"/>
    </location>
</feature>
<feature type="mutagenesis site" description="No significant effects on pH sensitivity of chloroquine transport; when associated with K-207." evidence="17">
    <original>K</original>
    <variation>E</variation>
    <location>
        <position position="80"/>
    </location>
</feature>
<feature type="mutagenesis site" description="Modestly decreases pH sensitivity of chloroquine transport." evidence="17">
    <original>N</original>
    <variation>A</variation>
    <location>
        <position position="84"/>
    </location>
</feature>
<feature type="mutagenesis site" description="Increases transport activity for chloroquine at pH 6.0 with no significant effects on pH-sensitivity of chloroquine transport." evidence="17">
    <original>H</original>
    <variation>A</variation>
    <location>
        <position position="97"/>
    </location>
</feature>
<feature type="mutagenesis site" description="Decreases transport activity for chloroquine at pH 6.0." evidence="17">
    <original>D</original>
    <variation>N</variation>
    <location>
        <position position="137"/>
    </location>
</feature>
<feature type="mutagenesis site" description="Abrogates pH sensitivity of chloroquine transport." evidence="17">
    <original>E</original>
    <variation>A</variation>
    <location>
        <position position="207"/>
    </location>
</feature>
<feature type="mutagenesis site" description="No significant effects on pH sensitivity of chloroquine transport; when associated with E-80." evidence="17">
    <original>E</original>
    <variation>K</variation>
    <location>
        <position position="207"/>
    </location>
</feature>
<feature type="mutagenesis site" description="No significant effects on pH sensitivity of chloroquine transport." evidence="17">
    <original>E</original>
    <variation>N</variation>
    <variation>H</variation>
    <location>
        <position position="207"/>
    </location>
</feature>
<feature type="mutagenesis site" description="No significant effects on pH sensitivity of chloroquine transport." evidence="17">
    <original>E</original>
    <variation>A</variation>
    <location>
        <position position="208"/>
    </location>
</feature>
<feature type="mutagenesis site" description="Increases pH sensitivity of chloroquine transport." evidence="17">
    <original>H</original>
    <variation>A</variation>
    <location>
        <position position="273"/>
    </location>
</feature>
<feature type="mutagenesis site" description="Decreases transport activity for chloroquine at pH 6.0." evidence="17">
    <original>D</original>
    <variation>N</variation>
    <location>
        <position position="329"/>
    </location>
</feature>
<feature type="mutagenesis site" description="Modestly decreases pH sensitivity of chloroquine transport." evidence="17">
    <original>E</original>
    <variation>A</variation>
    <location>
        <position position="372"/>
    </location>
</feature>
<evidence type="ECO:0000250" key="1">
    <source>
        <dbReference type="UniProtKB" id="W7FI62"/>
    </source>
</evidence>
<evidence type="ECO:0000255" key="2"/>
<evidence type="ECO:0000269" key="3">
    <source>
    </source>
</evidence>
<evidence type="ECO:0000269" key="4">
    <source>
    </source>
</evidence>
<evidence type="ECO:0000269" key="5">
    <source>
    </source>
</evidence>
<evidence type="ECO:0000269" key="6">
    <source>
    </source>
</evidence>
<evidence type="ECO:0000269" key="7">
    <source>
    </source>
</evidence>
<evidence type="ECO:0000269" key="8">
    <source>
    </source>
</evidence>
<evidence type="ECO:0000269" key="9">
    <source>
    </source>
</evidence>
<evidence type="ECO:0000269" key="10">
    <source>
    </source>
</evidence>
<evidence type="ECO:0000269" key="11">
    <source>
    </source>
</evidence>
<evidence type="ECO:0000269" key="12">
    <source>
    </source>
</evidence>
<evidence type="ECO:0000269" key="13">
    <source>
    </source>
</evidence>
<evidence type="ECO:0000269" key="14">
    <source>
    </source>
</evidence>
<evidence type="ECO:0000269" key="15">
    <source>
    </source>
</evidence>
<evidence type="ECO:0000269" key="16">
    <source>
    </source>
</evidence>
<evidence type="ECO:0000269" key="17">
    <source>
    </source>
</evidence>
<evidence type="ECO:0000269" key="18">
    <source ref="3"/>
</evidence>
<evidence type="ECO:0000269" key="19">
    <source ref="5"/>
</evidence>
<evidence type="ECO:0000303" key="20">
    <source>
    </source>
</evidence>
<evidence type="ECO:0000303" key="21">
    <source>
    </source>
</evidence>
<evidence type="ECO:0000303" key="22">
    <source>
    </source>
</evidence>
<evidence type="ECO:0000303" key="23">
    <source>
    </source>
</evidence>
<evidence type="ECO:0000303" key="24">
    <source>
    </source>
</evidence>
<evidence type="ECO:0000305" key="25"/>